<organism>
    <name type="scientific">Wigglesworthia glossinidia brevipalpis</name>
    <dbReference type="NCBI Taxonomy" id="36870"/>
    <lineage>
        <taxon>Bacteria</taxon>
        <taxon>Pseudomonadati</taxon>
        <taxon>Pseudomonadota</taxon>
        <taxon>Gammaproteobacteria</taxon>
        <taxon>Enterobacterales</taxon>
        <taxon>Erwiniaceae</taxon>
        <taxon>Wigglesworthia</taxon>
    </lineage>
</organism>
<reference key="1">
    <citation type="journal article" date="2002" name="Nat. Genet.">
        <title>Genome sequence of the endocellular obligate symbiont of tsetse flies, Wigglesworthia glossinidia.</title>
        <authorList>
            <person name="Akman L."/>
            <person name="Yamashita A."/>
            <person name="Watanabe H."/>
            <person name="Oshima K."/>
            <person name="Shiba T."/>
            <person name="Hattori M."/>
            <person name="Aksoy S."/>
        </authorList>
    </citation>
    <scope>NUCLEOTIDE SEQUENCE [LARGE SCALE GENOMIC DNA]</scope>
</reference>
<dbReference type="EMBL" id="BA000021">
    <property type="protein sequence ID" value="BAC24155.1"/>
    <property type="molecule type" value="Genomic_DNA"/>
</dbReference>
<dbReference type="SMR" id="Q8D3J2"/>
<dbReference type="STRING" id="36870.gene:10368487"/>
<dbReference type="KEGG" id="wbr:atpC"/>
<dbReference type="eggNOG" id="COG0355">
    <property type="taxonomic scope" value="Bacteria"/>
</dbReference>
<dbReference type="HOGENOM" id="CLU_084338_2_0_6"/>
<dbReference type="OrthoDB" id="9791445at2"/>
<dbReference type="Proteomes" id="UP000000562">
    <property type="component" value="Chromosome"/>
</dbReference>
<dbReference type="GO" id="GO:0005886">
    <property type="term" value="C:plasma membrane"/>
    <property type="evidence" value="ECO:0007669"/>
    <property type="project" value="UniProtKB-SubCell"/>
</dbReference>
<dbReference type="GO" id="GO:0045259">
    <property type="term" value="C:proton-transporting ATP synthase complex"/>
    <property type="evidence" value="ECO:0007669"/>
    <property type="project" value="UniProtKB-KW"/>
</dbReference>
<dbReference type="GO" id="GO:0005524">
    <property type="term" value="F:ATP binding"/>
    <property type="evidence" value="ECO:0007669"/>
    <property type="project" value="UniProtKB-UniRule"/>
</dbReference>
<dbReference type="GO" id="GO:0046933">
    <property type="term" value="F:proton-transporting ATP synthase activity, rotational mechanism"/>
    <property type="evidence" value="ECO:0007669"/>
    <property type="project" value="UniProtKB-UniRule"/>
</dbReference>
<dbReference type="CDD" id="cd12152">
    <property type="entry name" value="F1-ATPase_delta"/>
    <property type="match status" value="1"/>
</dbReference>
<dbReference type="FunFam" id="2.60.15.10:FF:000001">
    <property type="entry name" value="ATP synthase epsilon chain"/>
    <property type="match status" value="1"/>
</dbReference>
<dbReference type="Gene3D" id="1.20.5.440">
    <property type="entry name" value="ATP synthase delta/epsilon subunit, C-terminal domain"/>
    <property type="match status" value="1"/>
</dbReference>
<dbReference type="Gene3D" id="2.60.15.10">
    <property type="entry name" value="F0F1 ATP synthase delta/epsilon subunit, N-terminal"/>
    <property type="match status" value="1"/>
</dbReference>
<dbReference type="HAMAP" id="MF_00530">
    <property type="entry name" value="ATP_synth_epsil_bac"/>
    <property type="match status" value="1"/>
</dbReference>
<dbReference type="InterPro" id="IPR036794">
    <property type="entry name" value="ATP_F1_dsu/esu_C_sf"/>
</dbReference>
<dbReference type="InterPro" id="IPR001469">
    <property type="entry name" value="ATP_synth_F1_dsu/esu"/>
</dbReference>
<dbReference type="InterPro" id="IPR020546">
    <property type="entry name" value="ATP_synth_F1_dsu/esu_N"/>
</dbReference>
<dbReference type="InterPro" id="IPR020547">
    <property type="entry name" value="ATP_synth_F1_esu_C"/>
</dbReference>
<dbReference type="InterPro" id="IPR036771">
    <property type="entry name" value="ATPsynth_dsu/esu_N"/>
</dbReference>
<dbReference type="NCBIfam" id="TIGR01216">
    <property type="entry name" value="ATP_synt_epsi"/>
    <property type="match status" value="1"/>
</dbReference>
<dbReference type="NCBIfam" id="NF001847">
    <property type="entry name" value="PRK00571.1-4"/>
    <property type="match status" value="1"/>
</dbReference>
<dbReference type="PANTHER" id="PTHR13822">
    <property type="entry name" value="ATP SYNTHASE DELTA/EPSILON CHAIN"/>
    <property type="match status" value="1"/>
</dbReference>
<dbReference type="PANTHER" id="PTHR13822:SF10">
    <property type="entry name" value="ATP SYNTHASE EPSILON CHAIN, CHLOROPLASTIC"/>
    <property type="match status" value="1"/>
</dbReference>
<dbReference type="Pfam" id="PF00401">
    <property type="entry name" value="ATP-synt_DE"/>
    <property type="match status" value="1"/>
</dbReference>
<dbReference type="Pfam" id="PF02823">
    <property type="entry name" value="ATP-synt_DE_N"/>
    <property type="match status" value="1"/>
</dbReference>
<dbReference type="SUPFAM" id="SSF46604">
    <property type="entry name" value="Epsilon subunit of F1F0-ATP synthase C-terminal domain"/>
    <property type="match status" value="1"/>
</dbReference>
<dbReference type="SUPFAM" id="SSF51344">
    <property type="entry name" value="Epsilon subunit of F1F0-ATP synthase N-terminal domain"/>
    <property type="match status" value="1"/>
</dbReference>
<name>ATPE_WIGBR</name>
<protein>
    <recommendedName>
        <fullName evidence="1">ATP synthase epsilon chain</fullName>
    </recommendedName>
    <alternativeName>
        <fullName evidence="1">ATP synthase F1 sector epsilon subunit</fullName>
    </alternativeName>
    <alternativeName>
        <fullName evidence="1">F-ATPase epsilon subunit</fullName>
    </alternativeName>
</protein>
<accession>Q8D3J2</accession>
<gene>
    <name evidence="1" type="primary">atpC</name>
    <name type="ordered locus">WIGBR0090</name>
</gene>
<sequence length="138" mass="15333">MNNKFYQLTVISAENFIFSNLVKKSNITGSEGNLGILPGHAPLITKIKPGLIHIISSKNIEEYIYLSGGILEINSNVVTVLADTAIRGKEIDEKKAIESKKNAEELILKSKERHEYIRAVIELSKAIAKLRVCKLSNK</sequence>
<proteinExistence type="inferred from homology"/>
<comment type="function">
    <text evidence="1">Produces ATP from ADP in the presence of a proton gradient across the membrane.</text>
</comment>
<comment type="subunit">
    <text>F-type ATPases have 2 components, CF(1) - the catalytic core - and CF(0) - the membrane proton channel. CF(1) has five subunits: alpha(3), beta(3), gamma(1), delta(1), epsilon(1). CF(0) has three main subunits: a, b and c.</text>
</comment>
<comment type="subcellular location">
    <subcellularLocation>
        <location evidence="1">Cell inner membrane</location>
        <topology evidence="1">Peripheral membrane protein</topology>
    </subcellularLocation>
</comment>
<comment type="similarity">
    <text evidence="1">Belongs to the ATPase epsilon chain family.</text>
</comment>
<feature type="chain" id="PRO_0000188240" description="ATP synthase epsilon chain">
    <location>
        <begin position="1"/>
        <end position="138"/>
    </location>
</feature>
<evidence type="ECO:0000255" key="1">
    <source>
        <dbReference type="HAMAP-Rule" id="MF_00530"/>
    </source>
</evidence>
<keyword id="KW-0066">ATP synthesis</keyword>
<keyword id="KW-0997">Cell inner membrane</keyword>
<keyword id="KW-1003">Cell membrane</keyword>
<keyword id="KW-0139">CF(1)</keyword>
<keyword id="KW-0375">Hydrogen ion transport</keyword>
<keyword id="KW-0406">Ion transport</keyword>
<keyword id="KW-0472">Membrane</keyword>
<keyword id="KW-1185">Reference proteome</keyword>
<keyword id="KW-0813">Transport</keyword>